<feature type="chain" id="PRO_0000091748" description="3-hydroxyacyl-[acyl-carrier-protein] dehydratase FabZ">
    <location>
        <begin position="1"/>
        <end position="141"/>
    </location>
</feature>
<feature type="active site" evidence="1">
    <location>
        <position position="48"/>
    </location>
</feature>
<proteinExistence type="inferred from homology"/>
<gene>
    <name evidence="1" type="primary">fabZ</name>
    <name type="ordered locus">stu0390</name>
</gene>
<reference key="1">
    <citation type="journal article" date="2004" name="Nat. Biotechnol.">
        <title>Complete sequence and comparative genome analysis of the dairy bacterium Streptococcus thermophilus.</title>
        <authorList>
            <person name="Bolotin A."/>
            <person name="Quinquis B."/>
            <person name="Renault P."/>
            <person name="Sorokin A."/>
            <person name="Ehrlich S.D."/>
            <person name="Kulakauskas S."/>
            <person name="Lapidus A."/>
            <person name="Goltsman E."/>
            <person name="Mazur M."/>
            <person name="Pusch G.D."/>
            <person name="Fonstein M."/>
            <person name="Overbeek R."/>
            <person name="Kyprides N."/>
            <person name="Purnelle B."/>
            <person name="Prozzi D."/>
            <person name="Ngui K."/>
            <person name="Masuy D."/>
            <person name="Hancy F."/>
            <person name="Burteau S."/>
            <person name="Boutry M."/>
            <person name="Delcour J."/>
            <person name="Goffeau A."/>
            <person name="Hols P."/>
        </authorList>
    </citation>
    <scope>NUCLEOTIDE SEQUENCE [LARGE SCALE GENOMIC DNA]</scope>
    <source>
        <strain>ATCC BAA-250 / LMG 18311</strain>
    </source>
</reference>
<dbReference type="EC" id="4.2.1.59" evidence="1"/>
<dbReference type="EMBL" id="CP000023">
    <property type="protein sequence ID" value="AAV60108.1"/>
    <property type="molecule type" value="Genomic_DNA"/>
</dbReference>
<dbReference type="RefSeq" id="WP_002885470.1">
    <property type="nucleotide sequence ID" value="NC_006448.1"/>
</dbReference>
<dbReference type="SMR" id="Q5M5R4"/>
<dbReference type="STRING" id="264199.stu0390"/>
<dbReference type="GeneID" id="93791569"/>
<dbReference type="KEGG" id="stl:stu0390"/>
<dbReference type="eggNOG" id="COG0764">
    <property type="taxonomic scope" value="Bacteria"/>
</dbReference>
<dbReference type="HOGENOM" id="CLU_078912_3_0_9"/>
<dbReference type="Proteomes" id="UP000001170">
    <property type="component" value="Chromosome"/>
</dbReference>
<dbReference type="GO" id="GO:0005737">
    <property type="term" value="C:cytoplasm"/>
    <property type="evidence" value="ECO:0007669"/>
    <property type="project" value="UniProtKB-SubCell"/>
</dbReference>
<dbReference type="GO" id="GO:0016020">
    <property type="term" value="C:membrane"/>
    <property type="evidence" value="ECO:0007669"/>
    <property type="project" value="GOC"/>
</dbReference>
<dbReference type="GO" id="GO:0019171">
    <property type="term" value="F:(3R)-hydroxyacyl-[acyl-carrier-protein] dehydratase activity"/>
    <property type="evidence" value="ECO:0007669"/>
    <property type="project" value="UniProtKB-EC"/>
</dbReference>
<dbReference type="GO" id="GO:0006633">
    <property type="term" value="P:fatty acid biosynthetic process"/>
    <property type="evidence" value="ECO:0007669"/>
    <property type="project" value="UniProtKB-UniRule"/>
</dbReference>
<dbReference type="GO" id="GO:0009245">
    <property type="term" value="P:lipid A biosynthetic process"/>
    <property type="evidence" value="ECO:0007669"/>
    <property type="project" value="UniProtKB-UniRule"/>
</dbReference>
<dbReference type="CDD" id="cd01288">
    <property type="entry name" value="FabZ"/>
    <property type="match status" value="1"/>
</dbReference>
<dbReference type="FunFam" id="3.10.129.10:FF:000001">
    <property type="entry name" value="3-hydroxyacyl-[acyl-carrier-protein] dehydratase FabZ"/>
    <property type="match status" value="1"/>
</dbReference>
<dbReference type="Gene3D" id="3.10.129.10">
    <property type="entry name" value="Hotdog Thioesterase"/>
    <property type="match status" value="1"/>
</dbReference>
<dbReference type="HAMAP" id="MF_00406">
    <property type="entry name" value="FabZ"/>
    <property type="match status" value="1"/>
</dbReference>
<dbReference type="InterPro" id="IPR013114">
    <property type="entry name" value="FabA_FabZ"/>
</dbReference>
<dbReference type="InterPro" id="IPR010084">
    <property type="entry name" value="FabZ"/>
</dbReference>
<dbReference type="InterPro" id="IPR029069">
    <property type="entry name" value="HotDog_dom_sf"/>
</dbReference>
<dbReference type="NCBIfam" id="TIGR01750">
    <property type="entry name" value="fabZ"/>
    <property type="match status" value="1"/>
</dbReference>
<dbReference type="NCBIfam" id="NF000582">
    <property type="entry name" value="PRK00006.1"/>
    <property type="match status" value="1"/>
</dbReference>
<dbReference type="PANTHER" id="PTHR30272">
    <property type="entry name" value="3-HYDROXYACYL-[ACYL-CARRIER-PROTEIN] DEHYDRATASE"/>
    <property type="match status" value="1"/>
</dbReference>
<dbReference type="PANTHER" id="PTHR30272:SF1">
    <property type="entry name" value="3-HYDROXYACYL-[ACYL-CARRIER-PROTEIN] DEHYDRATASE"/>
    <property type="match status" value="1"/>
</dbReference>
<dbReference type="Pfam" id="PF07977">
    <property type="entry name" value="FabA"/>
    <property type="match status" value="1"/>
</dbReference>
<dbReference type="SUPFAM" id="SSF54637">
    <property type="entry name" value="Thioesterase/thiol ester dehydrase-isomerase"/>
    <property type="match status" value="1"/>
</dbReference>
<evidence type="ECO:0000255" key="1">
    <source>
        <dbReference type="HAMAP-Rule" id="MF_00406"/>
    </source>
</evidence>
<sequence length="141" mass="15445">MTIDINAIREALPHRYPMLLVDRVLEVSEDEITAIKNVTINEPFFNGHFPQYPVMPGVLIMEALAQTAGVLELSKPENKGKLVFYAGMDKVKFKKQVVPGDQLVMTAKFVKRRGTIAVVEAKAEVDGKLAASGTLTFAIGS</sequence>
<keyword id="KW-0963">Cytoplasm</keyword>
<keyword id="KW-0441">Lipid A biosynthesis</keyword>
<keyword id="KW-0444">Lipid biosynthesis</keyword>
<keyword id="KW-0443">Lipid metabolism</keyword>
<keyword id="KW-0456">Lyase</keyword>
<keyword id="KW-1185">Reference proteome</keyword>
<comment type="function">
    <text evidence="1">Involved in unsaturated fatty acids biosynthesis. Catalyzes the dehydration of short chain beta-hydroxyacyl-ACPs and long chain saturated and unsaturated beta-hydroxyacyl-ACPs.</text>
</comment>
<comment type="catalytic activity">
    <reaction evidence="1">
        <text>a (3R)-hydroxyacyl-[ACP] = a (2E)-enoyl-[ACP] + H2O</text>
        <dbReference type="Rhea" id="RHEA:13097"/>
        <dbReference type="Rhea" id="RHEA-COMP:9925"/>
        <dbReference type="Rhea" id="RHEA-COMP:9945"/>
        <dbReference type="ChEBI" id="CHEBI:15377"/>
        <dbReference type="ChEBI" id="CHEBI:78784"/>
        <dbReference type="ChEBI" id="CHEBI:78827"/>
        <dbReference type="EC" id="4.2.1.59"/>
    </reaction>
</comment>
<comment type="subcellular location">
    <subcellularLocation>
        <location evidence="1">Cytoplasm</location>
    </subcellularLocation>
</comment>
<comment type="similarity">
    <text evidence="1">Belongs to the thioester dehydratase family. FabZ subfamily.</text>
</comment>
<name>FABZ_STRT2</name>
<protein>
    <recommendedName>
        <fullName evidence="1">3-hydroxyacyl-[acyl-carrier-protein] dehydratase FabZ</fullName>
        <ecNumber evidence="1">4.2.1.59</ecNumber>
    </recommendedName>
    <alternativeName>
        <fullName evidence="1">(3R)-hydroxymyristoyl-[acyl-carrier-protein] dehydratase</fullName>
        <shortName evidence="1">(3R)-hydroxymyristoyl-ACP dehydrase</shortName>
    </alternativeName>
    <alternativeName>
        <fullName evidence="1">Beta-hydroxyacyl-ACP dehydratase</fullName>
    </alternativeName>
</protein>
<organism>
    <name type="scientific">Streptococcus thermophilus (strain ATCC BAA-250 / LMG 18311)</name>
    <dbReference type="NCBI Taxonomy" id="264199"/>
    <lineage>
        <taxon>Bacteria</taxon>
        <taxon>Bacillati</taxon>
        <taxon>Bacillota</taxon>
        <taxon>Bacilli</taxon>
        <taxon>Lactobacillales</taxon>
        <taxon>Streptococcaceae</taxon>
        <taxon>Streptococcus</taxon>
    </lineage>
</organism>
<accession>Q5M5R4</accession>